<organism>
    <name type="scientific">Apteryx australis</name>
    <name type="common">Southern brown kiwi</name>
    <dbReference type="NCBI Taxonomy" id="8822"/>
    <lineage>
        <taxon>Eukaryota</taxon>
        <taxon>Metazoa</taxon>
        <taxon>Chordata</taxon>
        <taxon>Craniata</taxon>
        <taxon>Vertebrata</taxon>
        <taxon>Euteleostomi</taxon>
        <taxon>Archelosauria</taxon>
        <taxon>Archosauria</taxon>
        <taxon>Dinosauria</taxon>
        <taxon>Saurischia</taxon>
        <taxon>Theropoda</taxon>
        <taxon>Coelurosauria</taxon>
        <taxon>Aves</taxon>
        <taxon>Palaeognathae</taxon>
        <taxon>Apterygiformes</taxon>
        <taxon>Apterygidae</taxon>
        <taxon>Apteryx</taxon>
    </lineage>
</organism>
<feature type="chain" id="PRO_0000060611" description="Cytochrome b">
    <location>
        <begin position="1"/>
        <end position="379"/>
    </location>
</feature>
<feature type="transmembrane region" description="Helical" evidence="2">
    <location>
        <begin position="34"/>
        <end position="54"/>
    </location>
</feature>
<feature type="transmembrane region" description="Helical" evidence="2">
    <location>
        <begin position="78"/>
        <end position="99"/>
    </location>
</feature>
<feature type="transmembrane region" description="Helical" evidence="2">
    <location>
        <begin position="114"/>
        <end position="134"/>
    </location>
</feature>
<feature type="transmembrane region" description="Helical" evidence="2">
    <location>
        <begin position="179"/>
        <end position="199"/>
    </location>
</feature>
<feature type="transmembrane region" description="Helical" evidence="2">
    <location>
        <begin position="227"/>
        <end position="247"/>
    </location>
</feature>
<feature type="transmembrane region" description="Helical" evidence="2">
    <location>
        <begin position="289"/>
        <end position="309"/>
    </location>
</feature>
<feature type="transmembrane region" description="Helical" evidence="2">
    <location>
        <begin position="321"/>
        <end position="341"/>
    </location>
</feature>
<feature type="transmembrane region" description="Helical" evidence="2">
    <location>
        <begin position="348"/>
        <end position="368"/>
    </location>
</feature>
<feature type="binding site" description="axial binding residue" evidence="2">
    <location>
        <position position="84"/>
    </location>
    <ligand>
        <name>heme b</name>
        <dbReference type="ChEBI" id="CHEBI:60344"/>
        <label>b562</label>
    </ligand>
    <ligandPart>
        <name>Fe</name>
        <dbReference type="ChEBI" id="CHEBI:18248"/>
    </ligandPart>
</feature>
<feature type="binding site" description="axial binding residue" evidence="2">
    <location>
        <position position="98"/>
    </location>
    <ligand>
        <name>heme b</name>
        <dbReference type="ChEBI" id="CHEBI:60344"/>
        <label>b566</label>
    </ligand>
    <ligandPart>
        <name>Fe</name>
        <dbReference type="ChEBI" id="CHEBI:18248"/>
    </ligandPart>
</feature>
<feature type="binding site" description="axial binding residue" evidence="2">
    <location>
        <position position="183"/>
    </location>
    <ligand>
        <name>heme b</name>
        <dbReference type="ChEBI" id="CHEBI:60344"/>
        <label>b562</label>
    </ligand>
    <ligandPart>
        <name>Fe</name>
        <dbReference type="ChEBI" id="CHEBI:18248"/>
    </ligandPart>
</feature>
<feature type="binding site" description="axial binding residue" evidence="2">
    <location>
        <position position="197"/>
    </location>
    <ligand>
        <name>heme b</name>
        <dbReference type="ChEBI" id="CHEBI:60344"/>
        <label>b566</label>
    </ligand>
    <ligandPart>
        <name>Fe</name>
        <dbReference type="ChEBI" id="CHEBI:18248"/>
    </ligandPart>
</feature>
<feature type="binding site" evidence="2">
    <location>
        <position position="202"/>
    </location>
    <ligand>
        <name>a ubiquinone</name>
        <dbReference type="ChEBI" id="CHEBI:16389"/>
    </ligand>
</feature>
<dbReference type="EMBL" id="U76050">
    <property type="protein sequence ID" value="AAB61312.1"/>
    <property type="molecule type" value="Genomic_DNA"/>
</dbReference>
<dbReference type="EMBL" id="U28712">
    <property type="protein sequence ID" value="AAB07675.1"/>
    <property type="molecule type" value="Genomic_DNA"/>
</dbReference>
<dbReference type="EMBL" id="U28698">
    <property type="protein sequence ID" value="AAC59709.1"/>
    <property type="molecule type" value="Genomic_DNA"/>
</dbReference>
<dbReference type="EMBL" id="U28700">
    <property type="protein sequence ID" value="AAC59710.1"/>
    <property type="molecule type" value="Genomic_DNA"/>
</dbReference>
<dbReference type="EMBL" id="U28701">
    <property type="protein sequence ID" value="AAC59711.1"/>
    <property type="molecule type" value="Genomic_DNA"/>
</dbReference>
<dbReference type="EMBL" id="U28702">
    <property type="protein sequence ID" value="AAC59712.1"/>
    <property type="molecule type" value="Genomic_DNA"/>
</dbReference>
<dbReference type="EMBL" id="U28707">
    <property type="protein sequence ID" value="AAB07667.1"/>
    <property type="molecule type" value="Genomic_DNA"/>
</dbReference>
<dbReference type="EMBL" id="U28709">
    <property type="protein sequence ID" value="AAB07669.1"/>
    <property type="molecule type" value="Genomic_DNA"/>
</dbReference>
<dbReference type="EMBL" id="U28711">
    <property type="protein sequence ID" value="AAB07671.1"/>
    <property type="molecule type" value="Genomic_DNA"/>
</dbReference>
<dbReference type="SMR" id="Q36976"/>
<dbReference type="GO" id="GO:0005743">
    <property type="term" value="C:mitochondrial inner membrane"/>
    <property type="evidence" value="ECO:0007669"/>
    <property type="project" value="UniProtKB-SubCell"/>
</dbReference>
<dbReference type="GO" id="GO:0045275">
    <property type="term" value="C:respiratory chain complex III"/>
    <property type="evidence" value="ECO:0007669"/>
    <property type="project" value="InterPro"/>
</dbReference>
<dbReference type="GO" id="GO:0046872">
    <property type="term" value="F:metal ion binding"/>
    <property type="evidence" value="ECO:0007669"/>
    <property type="project" value="UniProtKB-KW"/>
</dbReference>
<dbReference type="GO" id="GO:0008121">
    <property type="term" value="F:ubiquinol-cytochrome-c reductase activity"/>
    <property type="evidence" value="ECO:0007669"/>
    <property type="project" value="InterPro"/>
</dbReference>
<dbReference type="GO" id="GO:0006122">
    <property type="term" value="P:mitochondrial electron transport, ubiquinol to cytochrome c"/>
    <property type="evidence" value="ECO:0007669"/>
    <property type="project" value="TreeGrafter"/>
</dbReference>
<dbReference type="CDD" id="cd00290">
    <property type="entry name" value="cytochrome_b_C"/>
    <property type="match status" value="1"/>
</dbReference>
<dbReference type="CDD" id="cd00284">
    <property type="entry name" value="Cytochrome_b_N"/>
    <property type="match status" value="1"/>
</dbReference>
<dbReference type="FunFam" id="1.20.810.10:FF:000002">
    <property type="entry name" value="Cytochrome b"/>
    <property type="match status" value="1"/>
</dbReference>
<dbReference type="Gene3D" id="1.20.810.10">
    <property type="entry name" value="Cytochrome Bc1 Complex, Chain C"/>
    <property type="match status" value="1"/>
</dbReference>
<dbReference type="InterPro" id="IPR005798">
    <property type="entry name" value="Cyt_b/b6_C"/>
</dbReference>
<dbReference type="InterPro" id="IPR036150">
    <property type="entry name" value="Cyt_b/b6_C_sf"/>
</dbReference>
<dbReference type="InterPro" id="IPR005797">
    <property type="entry name" value="Cyt_b/b6_N"/>
</dbReference>
<dbReference type="InterPro" id="IPR027387">
    <property type="entry name" value="Cytb/b6-like_sf"/>
</dbReference>
<dbReference type="InterPro" id="IPR030689">
    <property type="entry name" value="Cytochrome_b"/>
</dbReference>
<dbReference type="InterPro" id="IPR048260">
    <property type="entry name" value="Cytochrome_b_C_euk/bac"/>
</dbReference>
<dbReference type="InterPro" id="IPR048259">
    <property type="entry name" value="Cytochrome_b_N_euk/bac"/>
</dbReference>
<dbReference type="InterPro" id="IPR016174">
    <property type="entry name" value="Di-haem_cyt_TM"/>
</dbReference>
<dbReference type="PANTHER" id="PTHR19271">
    <property type="entry name" value="CYTOCHROME B"/>
    <property type="match status" value="1"/>
</dbReference>
<dbReference type="PANTHER" id="PTHR19271:SF16">
    <property type="entry name" value="CYTOCHROME B"/>
    <property type="match status" value="1"/>
</dbReference>
<dbReference type="Pfam" id="PF00032">
    <property type="entry name" value="Cytochrom_B_C"/>
    <property type="match status" value="1"/>
</dbReference>
<dbReference type="Pfam" id="PF00033">
    <property type="entry name" value="Cytochrome_B"/>
    <property type="match status" value="1"/>
</dbReference>
<dbReference type="PIRSF" id="PIRSF038885">
    <property type="entry name" value="COB"/>
    <property type="match status" value="1"/>
</dbReference>
<dbReference type="SUPFAM" id="SSF81648">
    <property type="entry name" value="a domain/subunit of cytochrome bc1 complex (Ubiquinol-cytochrome c reductase)"/>
    <property type="match status" value="1"/>
</dbReference>
<dbReference type="SUPFAM" id="SSF81342">
    <property type="entry name" value="Transmembrane di-heme cytochromes"/>
    <property type="match status" value="1"/>
</dbReference>
<dbReference type="PROSITE" id="PS51003">
    <property type="entry name" value="CYTB_CTER"/>
    <property type="match status" value="1"/>
</dbReference>
<dbReference type="PROSITE" id="PS51002">
    <property type="entry name" value="CYTB_NTER"/>
    <property type="match status" value="1"/>
</dbReference>
<proteinExistence type="inferred from homology"/>
<reference key="1">
    <citation type="book" date="1997" name="Avian molecular evolution and systematics">
        <title>Phylogenetic relationships of the ratite birds: resolving conflicts between molecular and morphological data sets.</title>
        <editorList>
            <person name="Mindell D.P."/>
        </editorList>
        <authorList>
            <person name="Lee K."/>
            <person name="Feinstein J."/>
            <person name="Cracraft J."/>
        </authorList>
    </citation>
    <scope>NUCLEOTIDE SEQUENCE [GENOMIC DNA]</scope>
    <source>
        <strain>Mantelli</strain>
    </source>
</reference>
<reference key="2">
    <citation type="journal article" date="1995" name="Proc. Natl. Acad. Sci. U.S.A.">
        <title>Flightless brown kiwis of New Zealand possess extremely subdivided population structure and cryptic species like small mammals.</title>
        <authorList>
            <person name="Baker A.J."/>
            <person name="Daugherty C.H."/>
            <person name="Colbourne R."/>
            <person name="McLennan J.L."/>
        </authorList>
    </citation>
    <scope>NUCLEOTIDE SEQUENCE [GENOMIC DNA] OF 32-249</scope>
</reference>
<comment type="function">
    <text evidence="2">Component of the ubiquinol-cytochrome c reductase complex (complex III or cytochrome b-c1 complex) that is part of the mitochondrial respiratory chain. The b-c1 complex mediates electron transfer from ubiquinol to cytochrome c. Contributes to the generation of a proton gradient across the mitochondrial membrane that is then used for ATP synthesis.</text>
</comment>
<comment type="cofactor">
    <cofactor evidence="2">
        <name>heme b</name>
        <dbReference type="ChEBI" id="CHEBI:60344"/>
    </cofactor>
    <text evidence="2">Binds 2 heme b groups non-covalently.</text>
</comment>
<comment type="subunit">
    <text evidence="2">The cytochrome bc1 complex contains 11 subunits: 3 respiratory subunits (MT-CYB, CYC1 and UQCRFS1), 2 core proteins (UQCRC1 and UQCRC2) and 6 low-molecular weight proteins (UQCRH/QCR6, UQCRB/QCR7, UQCRQ/QCR8, UQCR10/QCR9, UQCR11/QCR10 and a cleavage product of UQCRFS1). This cytochrome bc1 complex then forms a dimer.</text>
</comment>
<comment type="subcellular location">
    <subcellularLocation>
        <location evidence="2">Mitochondrion inner membrane</location>
        <topology evidence="2">Multi-pass membrane protein</topology>
    </subcellularLocation>
</comment>
<comment type="miscellaneous">
    <text evidence="1">Heme 1 (or BL or b562) is low-potential and absorbs at about 562 nm, and heme 2 (or BH or b566) is high-potential and absorbs at about 566 nm.</text>
</comment>
<comment type="similarity">
    <text evidence="3 4">Belongs to the cytochrome b family.</text>
</comment>
<comment type="caution">
    <text evidence="2">The full-length protein contains only eight transmembrane helices, not nine as predicted by bioinformatics tools.</text>
</comment>
<sequence>MAPIIRKSHPLLKIINNSLIDLPSPSNISAWWNFGSLLGICLITQILTGLLLAMHYTADTSLAFSSIAHICRNVQYGWLIRNLHANGASFFFICIYFHIGRGFYYGSYLYKETWNTGIILLLTLMATAFVGYVLPWGQMSFWGATVITNLFSAIPYIGQTLVEWAWGGFSVDNPTLTRFFALHFLLPFLIAGITLIHLTFLHESGSNNPLGIISHCDKIPFHPYFSLKDILGFTLMLIPLLTLTFFSPNLLGDPENFTPANPLVTPPHIKPEWYFLFAYAILRSIPNKLGGVLALAASVLILFLTPLLHKSKQRSMAFRPFSQVLFWLLVANLLILTWVGSQPVEHPFIAIGQMASFTYFLILLVLFPMIGALENKMIY</sequence>
<accession>Q36976</accession>
<keyword id="KW-0249">Electron transport</keyword>
<keyword id="KW-0349">Heme</keyword>
<keyword id="KW-0408">Iron</keyword>
<keyword id="KW-0472">Membrane</keyword>
<keyword id="KW-0479">Metal-binding</keyword>
<keyword id="KW-0496">Mitochondrion</keyword>
<keyword id="KW-0999">Mitochondrion inner membrane</keyword>
<keyword id="KW-0679">Respiratory chain</keyword>
<keyword id="KW-0812">Transmembrane</keyword>
<keyword id="KW-1133">Transmembrane helix</keyword>
<keyword id="KW-0813">Transport</keyword>
<keyword id="KW-0830">Ubiquinone</keyword>
<gene>
    <name type="primary">MT-CYB</name>
    <name type="synonym">COB</name>
    <name type="synonym">CYTB</name>
    <name type="synonym">MTCYB</name>
</gene>
<evidence type="ECO:0000250" key="1"/>
<evidence type="ECO:0000250" key="2">
    <source>
        <dbReference type="UniProtKB" id="P00157"/>
    </source>
</evidence>
<evidence type="ECO:0000255" key="3">
    <source>
        <dbReference type="PROSITE-ProRule" id="PRU00967"/>
    </source>
</evidence>
<evidence type="ECO:0000255" key="4">
    <source>
        <dbReference type="PROSITE-ProRule" id="PRU00968"/>
    </source>
</evidence>
<protein>
    <recommendedName>
        <fullName>Cytochrome b</fullName>
    </recommendedName>
    <alternativeName>
        <fullName>Complex III subunit 3</fullName>
    </alternativeName>
    <alternativeName>
        <fullName>Complex III subunit III</fullName>
    </alternativeName>
    <alternativeName>
        <fullName>Cytochrome b-c1 complex subunit 3</fullName>
    </alternativeName>
    <alternativeName>
        <fullName>Ubiquinol-cytochrome-c reductase complex cytochrome b subunit</fullName>
    </alternativeName>
</protein>
<geneLocation type="mitochondrion"/>
<name>CYB_APTAU</name>